<evidence type="ECO:0000255" key="1">
    <source>
        <dbReference type="HAMAP-Rule" id="MF_00685"/>
    </source>
</evidence>
<name>GLGB_PARXL</name>
<organism>
    <name type="scientific">Paraburkholderia xenovorans (strain LB400)</name>
    <dbReference type="NCBI Taxonomy" id="266265"/>
    <lineage>
        <taxon>Bacteria</taxon>
        <taxon>Pseudomonadati</taxon>
        <taxon>Pseudomonadota</taxon>
        <taxon>Betaproteobacteria</taxon>
        <taxon>Burkholderiales</taxon>
        <taxon>Burkholderiaceae</taxon>
        <taxon>Paraburkholderia</taxon>
    </lineage>
</organism>
<reference key="1">
    <citation type="journal article" date="2006" name="Proc. Natl. Acad. Sci. U.S.A.">
        <title>Burkholderia xenovorans LB400 harbors a multi-replicon, 9.73-Mbp genome shaped for versatility.</title>
        <authorList>
            <person name="Chain P.S.G."/>
            <person name="Denef V.J."/>
            <person name="Konstantinidis K.T."/>
            <person name="Vergez L.M."/>
            <person name="Agullo L."/>
            <person name="Reyes V.L."/>
            <person name="Hauser L."/>
            <person name="Cordova M."/>
            <person name="Gomez L."/>
            <person name="Gonzalez M."/>
            <person name="Land M."/>
            <person name="Lao V."/>
            <person name="Larimer F."/>
            <person name="LiPuma J.J."/>
            <person name="Mahenthiralingam E."/>
            <person name="Malfatti S.A."/>
            <person name="Marx C.J."/>
            <person name="Parnell J.J."/>
            <person name="Ramette A."/>
            <person name="Richardson P."/>
            <person name="Seeger M."/>
            <person name="Smith D."/>
            <person name="Spilker T."/>
            <person name="Sul W.J."/>
            <person name="Tsoi T.V."/>
            <person name="Ulrich L.E."/>
            <person name="Zhulin I.B."/>
            <person name="Tiedje J.M."/>
        </authorList>
    </citation>
    <scope>NUCLEOTIDE SEQUENCE [LARGE SCALE GENOMIC DNA]</scope>
    <source>
        <strain>LB400</strain>
    </source>
</reference>
<dbReference type="EC" id="2.4.1.18" evidence="1"/>
<dbReference type="EMBL" id="CP000271">
    <property type="protein sequence ID" value="ABE33132.1"/>
    <property type="molecule type" value="Genomic_DNA"/>
</dbReference>
<dbReference type="RefSeq" id="WP_011490512.1">
    <property type="nucleotide sequence ID" value="NC_007952.1"/>
</dbReference>
<dbReference type="SMR" id="Q13S07"/>
<dbReference type="STRING" id="266265.Bxe_B2863"/>
<dbReference type="CAZy" id="CBM48">
    <property type="family name" value="Carbohydrate-Binding Module Family 48"/>
</dbReference>
<dbReference type="CAZy" id="GH13">
    <property type="family name" value="Glycoside Hydrolase Family 13"/>
</dbReference>
<dbReference type="KEGG" id="bxb:DR64_5192"/>
<dbReference type="KEGG" id="bxe:Bxe_B2863"/>
<dbReference type="PATRIC" id="fig|266265.5.peg.4828"/>
<dbReference type="eggNOG" id="COG0296">
    <property type="taxonomic scope" value="Bacteria"/>
</dbReference>
<dbReference type="OrthoDB" id="9800174at2"/>
<dbReference type="UniPathway" id="UPA00164"/>
<dbReference type="Proteomes" id="UP000001817">
    <property type="component" value="Chromosome 2"/>
</dbReference>
<dbReference type="GO" id="GO:0005829">
    <property type="term" value="C:cytosol"/>
    <property type="evidence" value="ECO:0007669"/>
    <property type="project" value="TreeGrafter"/>
</dbReference>
<dbReference type="GO" id="GO:0003844">
    <property type="term" value="F:1,4-alpha-glucan branching enzyme activity"/>
    <property type="evidence" value="ECO:0007669"/>
    <property type="project" value="UniProtKB-UniRule"/>
</dbReference>
<dbReference type="GO" id="GO:0043169">
    <property type="term" value="F:cation binding"/>
    <property type="evidence" value="ECO:0007669"/>
    <property type="project" value="InterPro"/>
</dbReference>
<dbReference type="GO" id="GO:0004553">
    <property type="term" value="F:hydrolase activity, hydrolyzing O-glycosyl compounds"/>
    <property type="evidence" value="ECO:0007669"/>
    <property type="project" value="InterPro"/>
</dbReference>
<dbReference type="GO" id="GO:0005978">
    <property type="term" value="P:glycogen biosynthetic process"/>
    <property type="evidence" value="ECO:0007669"/>
    <property type="project" value="UniProtKB-UniRule"/>
</dbReference>
<dbReference type="CDD" id="cd11322">
    <property type="entry name" value="AmyAc_Glg_BE"/>
    <property type="match status" value="1"/>
</dbReference>
<dbReference type="CDD" id="cd02855">
    <property type="entry name" value="E_set_GBE_prok_N"/>
    <property type="match status" value="1"/>
</dbReference>
<dbReference type="FunFam" id="2.60.40.10:FF:000169">
    <property type="entry name" value="1,4-alpha-glucan branching enzyme GlgB"/>
    <property type="match status" value="1"/>
</dbReference>
<dbReference type="FunFam" id="2.60.40.1180:FF:000002">
    <property type="entry name" value="1,4-alpha-glucan branching enzyme GlgB"/>
    <property type="match status" value="1"/>
</dbReference>
<dbReference type="FunFam" id="3.20.20.80:FF:000003">
    <property type="entry name" value="1,4-alpha-glucan branching enzyme GlgB"/>
    <property type="match status" value="1"/>
</dbReference>
<dbReference type="Gene3D" id="3.20.20.80">
    <property type="entry name" value="Glycosidases"/>
    <property type="match status" value="1"/>
</dbReference>
<dbReference type="Gene3D" id="2.60.40.1180">
    <property type="entry name" value="Golgi alpha-mannosidase II"/>
    <property type="match status" value="1"/>
</dbReference>
<dbReference type="Gene3D" id="2.60.40.10">
    <property type="entry name" value="Immunoglobulins"/>
    <property type="match status" value="1"/>
</dbReference>
<dbReference type="HAMAP" id="MF_00685">
    <property type="entry name" value="GlgB"/>
    <property type="match status" value="1"/>
</dbReference>
<dbReference type="InterPro" id="IPR006048">
    <property type="entry name" value="A-amylase/branching_C"/>
</dbReference>
<dbReference type="InterPro" id="IPR037439">
    <property type="entry name" value="Branching_enzy"/>
</dbReference>
<dbReference type="InterPro" id="IPR006407">
    <property type="entry name" value="GlgB"/>
</dbReference>
<dbReference type="InterPro" id="IPR054169">
    <property type="entry name" value="GlgB_N"/>
</dbReference>
<dbReference type="InterPro" id="IPR044143">
    <property type="entry name" value="GlgB_N_E_set_prok"/>
</dbReference>
<dbReference type="InterPro" id="IPR006047">
    <property type="entry name" value="Glyco_hydro_13_cat_dom"/>
</dbReference>
<dbReference type="InterPro" id="IPR004193">
    <property type="entry name" value="Glyco_hydro_13_N"/>
</dbReference>
<dbReference type="InterPro" id="IPR013780">
    <property type="entry name" value="Glyco_hydro_b"/>
</dbReference>
<dbReference type="InterPro" id="IPR017853">
    <property type="entry name" value="Glycoside_hydrolase_SF"/>
</dbReference>
<dbReference type="InterPro" id="IPR013783">
    <property type="entry name" value="Ig-like_fold"/>
</dbReference>
<dbReference type="InterPro" id="IPR014756">
    <property type="entry name" value="Ig_E-set"/>
</dbReference>
<dbReference type="NCBIfam" id="TIGR01515">
    <property type="entry name" value="branching_enzym"/>
    <property type="match status" value="1"/>
</dbReference>
<dbReference type="NCBIfam" id="NF003811">
    <property type="entry name" value="PRK05402.1"/>
    <property type="match status" value="1"/>
</dbReference>
<dbReference type="NCBIfam" id="NF008967">
    <property type="entry name" value="PRK12313.1"/>
    <property type="match status" value="1"/>
</dbReference>
<dbReference type="PANTHER" id="PTHR43651">
    <property type="entry name" value="1,4-ALPHA-GLUCAN-BRANCHING ENZYME"/>
    <property type="match status" value="1"/>
</dbReference>
<dbReference type="PANTHER" id="PTHR43651:SF3">
    <property type="entry name" value="1,4-ALPHA-GLUCAN-BRANCHING ENZYME"/>
    <property type="match status" value="1"/>
</dbReference>
<dbReference type="Pfam" id="PF00128">
    <property type="entry name" value="Alpha-amylase"/>
    <property type="match status" value="1"/>
</dbReference>
<dbReference type="Pfam" id="PF02806">
    <property type="entry name" value="Alpha-amylase_C"/>
    <property type="match status" value="1"/>
</dbReference>
<dbReference type="Pfam" id="PF02922">
    <property type="entry name" value="CBM_48"/>
    <property type="match status" value="1"/>
</dbReference>
<dbReference type="Pfam" id="PF22019">
    <property type="entry name" value="GlgB_N"/>
    <property type="match status" value="1"/>
</dbReference>
<dbReference type="PIRSF" id="PIRSF000463">
    <property type="entry name" value="GlgB"/>
    <property type="match status" value="1"/>
</dbReference>
<dbReference type="SMART" id="SM00642">
    <property type="entry name" value="Aamy"/>
    <property type="match status" value="1"/>
</dbReference>
<dbReference type="SUPFAM" id="SSF51445">
    <property type="entry name" value="(Trans)glycosidases"/>
    <property type="match status" value="1"/>
</dbReference>
<dbReference type="SUPFAM" id="SSF81296">
    <property type="entry name" value="E set domains"/>
    <property type="match status" value="1"/>
</dbReference>
<dbReference type="SUPFAM" id="SSF51011">
    <property type="entry name" value="Glycosyl hydrolase domain"/>
    <property type="match status" value="1"/>
</dbReference>
<feature type="chain" id="PRO_0000260641" description="1,4-alpha-glucan branching enzyme GlgB">
    <location>
        <begin position="1"/>
        <end position="736"/>
    </location>
</feature>
<feature type="active site" description="Nucleophile" evidence="1">
    <location>
        <position position="415"/>
    </location>
</feature>
<feature type="active site" description="Proton donor" evidence="1">
    <location>
        <position position="470"/>
    </location>
</feature>
<sequence>MSEHDPAAGLQPLDIDALVEARHPDPFSQLGLHHTDAGPVVRALLPNAAHVSVISRADGALLGELEQLRPGLFAGRITSAAPYRLRIDWHGVVQEIEDTYSFGPVLGDEPLGRLAGGDPYAVLECLGARPMEVDGVPGVRFAVWAPNARRVSVVGDFNAWDGRRHPMRLRHQAGVWELFVPRVGPGTRYKYELLSRDGHPLPLKADPCAMQTEKPPGTASIVAHVDEVEQFPWSDHEWIQSRAGKQTARSPISIYEVHAESWLRVAEEGQRGLDWEELAERMIPYVKSMGFTHVEFMPIAEHPFGGSWGYQPLGQFAPSARFGKPEQFARFVDKAHEAGLGVILDWVPAHFPNDAHGLIDFDGTPLYEHADPREGYHQDWNTMIYNLGRNEVSAFLIASGLAWLKRYHVDGLRVDAVASMLYRDYSRAADQWVPNIYGGRENLESIAFLKRLNHEVGYVPGVPGAITIAEESTAWPGVTARVEDGGLGFQFKWNMGWMHDTLHYMEEDPVYRQYHHHNMTFGMVYAYSERFVLPLSHDEVVHGKGSLLGKMPGDRWQKFANLRAYFGFMWTHPGKKLLFMGGEFGQLAEFNHDASPHWHLLDDSNHHGVQMLVRDLNRLYSDEPALYLLDCEPGGFEWLIGDDSGNSVFAYRRTDGAGRELVVVCNMTPVPRLGYRIGMPRGGRWVEVLNTDAGVYGGSNMGNGGLIHTDSQSSHGWPHSAALTLPPLATIVLRAD</sequence>
<keyword id="KW-0119">Carbohydrate metabolism</keyword>
<keyword id="KW-0320">Glycogen biosynthesis</keyword>
<keyword id="KW-0321">Glycogen metabolism</keyword>
<keyword id="KW-0328">Glycosyltransferase</keyword>
<keyword id="KW-1185">Reference proteome</keyword>
<keyword id="KW-0808">Transferase</keyword>
<protein>
    <recommendedName>
        <fullName evidence="1">1,4-alpha-glucan branching enzyme GlgB</fullName>
        <ecNumber evidence="1">2.4.1.18</ecNumber>
    </recommendedName>
    <alternativeName>
        <fullName evidence="1">1,4-alpha-D-glucan:1,4-alpha-D-glucan 6-glucosyl-transferase</fullName>
    </alternativeName>
    <alternativeName>
        <fullName evidence="1">Alpha-(1-&gt;4)-glucan branching enzyme</fullName>
    </alternativeName>
    <alternativeName>
        <fullName evidence="1">Glycogen branching enzyme</fullName>
        <shortName evidence="1">BE</shortName>
    </alternativeName>
</protein>
<proteinExistence type="inferred from homology"/>
<gene>
    <name evidence="1" type="primary">glgB</name>
    <name type="ordered locus">Bxeno_B0164</name>
    <name type="ORF">Bxe_B2863</name>
</gene>
<comment type="function">
    <text evidence="1">Catalyzes the formation of the alpha-1,6-glucosidic linkages in glycogen by scission of a 1,4-alpha-linked oligosaccharide from growing alpha-1,4-glucan chains and the subsequent attachment of the oligosaccharide to the alpha-1,6 position.</text>
</comment>
<comment type="catalytic activity">
    <reaction evidence="1">
        <text>Transfers a segment of a (1-&gt;4)-alpha-D-glucan chain to a primary hydroxy group in a similar glucan chain.</text>
        <dbReference type="EC" id="2.4.1.18"/>
    </reaction>
</comment>
<comment type="pathway">
    <text evidence="1">Glycan biosynthesis; glycogen biosynthesis.</text>
</comment>
<comment type="subunit">
    <text evidence="1">Monomer.</text>
</comment>
<comment type="similarity">
    <text evidence="1">Belongs to the glycosyl hydrolase 13 family. GlgB subfamily.</text>
</comment>
<accession>Q13S07</accession>